<reference key="1">
    <citation type="submission" date="2001-02" db="EMBL/GenBank/DDBJ databases">
        <authorList>
            <person name="Lin Y.-H."/>
        </authorList>
    </citation>
    <scope>NUCLEOTIDE SEQUENCE [GENOMIC DNA]</scope>
</reference>
<feature type="chain" id="PRO_0000275009" description="NADH-ubiquinone oxidoreductase chain 4L">
    <location>
        <begin position="1"/>
        <end position="98"/>
    </location>
</feature>
<feature type="transmembrane region" description="Helical" evidence="3">
    <location>
        <begin position="2"/>
        <end position="22"/>
    </location>
</feature>
<feature type="transmembrane region" description="Helical" evidence="3">
    <location>
        <begin position="26"/>
        <end position="46"/>
    </location>
</feature>
<feature type="transmembrane region" description="Helical" evidence="3">
    <location>
        <begin position="59"/>
        <end position="79"/>
    </location>
</feature>
<dbReference type="EC" id="7.1.1.2"/>
<dbReference type="EMBL" id="AF348079">
    <property type="protein sequence ID" value="AAK64234.1"/>
    <property type="molecule type" value="Genomic_DNA"/>
</dbReference>
<dbReference type="RefSeq" id="NP_127485.1">
    <property type="nucleotide sequence ID" value="NC_002808.1"/>
</dbReference>
<dbReference type="SMR" id="Q953L2"/>
<dbReference type="GeneID" id="803383"/>
<dbReference type="CTD" id="4539"/>
<dbReference type="GO" id="GO:0005743">
    <property type="term" value="C:mitochondrial inner membrane"/>
    <property type="evidence" value="ECO:0000250"/>
    <property type="project" value="UniProtKB"/>
</dbReference>
<dbReference type="GO" id="GO:0045271">
    <property type="term" value="C:respiratory chain complex I"/>
    <property type="evidence" value="ECO:0000250"/>
    <property type="project" value="UniProtKB"/>
</dbReference>
<dbReference type="GO" id="GO:0008137">
    <property type="term" value="F:NADH dehydrogenase (ubiquinone) activity"/>
    <property type="evidence" value="ECO:0000250"/>
    <property type="project" value="UniProtKB"/>
</dbReference>
<dbReference type="GO" id="GO:0042773">
    <property type="term" value="P:ATP synthesis coupled electron transport"/>
    <property type="evidence" value="ECO:0007669"/>
    <property type="project" value="InterPro"/>
</dbReference>
<dbReference type="FunFam" id="1.10.287.3510:FF:000002">
    <property type="entry name" value="NADH-ubiquinone oxidoreductase chain 4L"/>
    <property type="match status" value="1"/>
</dbReference>
<dbReference type="Gene3D" id="1.10.287.3510">
    <property type="match status" value="1"/>
</dbReference>
<dbReference type="InterPro" id="IPR001133">
    <property type="entry name" value="NADH_UbQ_OxRdtase_chain4L/K"/>
</dbReference>
<dbReference type="InterPro" id="IPR039428">
    <property type="entry name" value="NUOK/Mnh_C1-like"/>
</dbReference>
<dbReference type="PANTHER" id="PTHR11434:SF0">
    <property type="entry name" value="NADH-UBIQUINONE OXIDOREDUCTASE CHAIN 4L"/>
    <property type="match status" value="1"/>
</dbReference>
<dbReference type="PANTHER" id="PTHR11434">
    <property type="entry name" value="NADH-UBIQUINONE OXIDOREDUCTASE SUBUNIT ND4L"/>
    <property type="match status" value="1"/>
</dbReference>
<dbReference type="Pfam" id="PF00420">
    <property type="entry name" value="Oxidored_q2"/>
    <property type="match status" value="1"/>
</dbReference>
<sequence length="98" mass="10901">MQMTMINMILAFIMATTGLLMFRSHFMSSLLCLEGMMLSIFILMSISTLNFNNSLAMMFPLVLLVFAACEAAIGLSLLVKISNTYGTDYVQNLNLLQC</sequence>
<name>NU4LM_ECHGY</name>
<proteinExistence type="inferred from homology"/>
<accession>Q953L2</accession>
<geneLocation type="mitochondrion"/>
<evidence type="ECO:0000250" key="1">
    <source>
        <dbReference type="UniProtKB" id="P03901"/>
    </source>
</evidence>
<evidence type="ECO:0000250" key="2">
    <source>
        <dbReference type="UniProtKB" id="P03902"/>
    </source>
</evidence>
<evidence type="ECO:0000255" key="3"/>
<evidence type="ECO:0000305" key="4"/>
<keyword id="KW-0249">Electron transport</keyword>
<keyword id="KW-0472">Membrane</keyword>
<keyword id="KW-0496">Mitochondrion</keyword>
<keyword id="KW-0999">Mitochondrion inner membrane</keyword>
<keyword id="KW-0520">NAD</keyword>
<keyword id="KW-0679">Respiratory chain</keyword>
<keyword id="KW-1278">Translocase</keyword>
<keyword id="KW-0812">Transmembrane</keyword>
<keyword id="KW-1133">Transmembrane helix</keyword>
<keyword id="KW-0813">Transport</keyword>
<keyword id="KW-0830">Ubiquinone</keyword>
<protein>
    <recommendedName>
        <fullName>NADH-ubiquinone oxidoreductase chain 4L</fullName>
        <ecNumber>7.1.1.2</ecNumber>
    </recommendedName>
    <alternativeName>
        <fullName>NADH dehydrogenase subunit 4L</fullName>
    </alternativeName>
</protein>
<comment type="function">
    <text evidence="1">Core subunit of the mitochondrial membrane respiratory chain NADH dehydrogenase (Complex I) which catalyzes electron transfer from NADH through the respiratory chain, using ubiquinone as an electron acceptor. Part of the enzyme membrane arm which is embedded in the lipid bilayer and involved in proton translocation.</text>
</comment>
<comment type="catalytic activity">
    <reaction evidence="1">
        <text>a ubiquinone + NADH + 5 H(+)(in) = a ubiquinol + NAD(+) + 4 H(+)(out)</text>
        <dbReference type="Rhea" id="RHEA:29091"/>
        <dbReference type="Rhea" id="RHEA-COMP:9565"/>
        <dbReference type="Rhea" id="RHEA-COMP:9566"/>
        <dbReference type="ChEBI" id="CHEBI:15378"/>
        <dbReference type="ChEBI" id="CHEBI:16389"/>
        <dbReference type="ChEBI" id="CHEBI:17976"/>
        <dbReference type="ChEBI" id="CHEBI:57540"/>
        <dbReference type="ChEBI" id="CHEBI:57945"/>
        <dbReference type="EC" id="7.1.1.2"/>
    </reaction>
    <physiologicalReaction direction="left-to-right" evidence="1">
        <dbReference type="Rhea" id="RHEA:29092"/>
    </physiologicalReaction>
</comment>
<comment type="subunit">
    <text evidence="2">Core subunit of respiratory chain NADH dehydrogenase (Complex I) which is composed of 45 different subunits.</text>
</comment>
<comment type="subcellular location">
    <subcellularLocation>
        <location evidence="2">Mitochondrion inner membrane</location>
        <topology evidence="3">Multi-pass membrane protein</topology>
    </subcellularLocation>
</comment>
<comment type="similarity">
    <text evidence="4">Belongs to the complex I subunit 4L family.</text>
</comment>
<organism>
    <name type="scientific">Echinosorex gymnura</name>
    <name type="common">Moon rat</name>
    <dbReference type="NCBI Taxonomy" id="162630"/>
    <lineage>
        <taxon>Eukaryota</taxon>
        <taxon>Metazoa</taxon>
        <taxon>Chordata</taxon>
        <taxon>Craniata</taxon>
        <taxon>Vertebrata</taxon>
        <taxon>Euteleostomi</taxon>
        <taxon>Mammalia</taxon>
        <taxon>Eutheria</taxon>
        <taxon>Laurasiatheria</taxon>
        <taxon>Eulipotyphla</taxon>
        <taxon>Erinaceidae</taxon>
        <taxon>Galericinae</taxon>
        <taxon>Echinosorex</taxon>
    </lineage>
</organism>
<gene>
    <name type="primary">MT-ND4L</name>
    <name type="synonym">MTND4L</name>
    <name type="synonym">NADH4L</name>
    <name type="synonym">ND4L</name>
</gene>